<name>RL11_SACI3</name>
<proteinExistence type="inferred from homology"/>
<keyword id="KW-0687">Ribonucleoprotein</keyword>
<keyword id="KW-0689">Ribosomal protein</keyword>
<keyword id="KW-0694">RNA-binding</keyword>
<keyword id="KW-0699">rRNA-binding</keyword>
<evidence type="ECO:0000255" key="1">
    <source>
        <dbReference type="HAMAP-Rule" id="MF_00736"/>
    </source>
</evidence>
<evidence type="ECO:0000305" key="2"/>
<dbReference type="EMBL" id="CP001401">
    <property type="protein sequence ID" value="ACP55750.1"/>
    <property type="molecule type" value="Genomic_DNA"/>
</dbReference>
<dbReference type="RefSeq" id="WP_012713968.1">
    <property type="nucleotide sequence ID" value="NC_012632.1"/>
</dbReference>
<dbReference type="SMR" id="C3MZB8"/>
<dbReference type="KEGG" id="sim:M1627_1879"/>
<dbReference type="HOGENOM" id="CLU_074237_4_0_2"/>
<dbReference type="Proteomes" id="UP000002307">
    <property type="component" value="Chromosome"/>
</dbReference>
<dbReference type="GO" id="GO:0015934">
    <property type="term" value="C:large ribosomal subunit"/>
    <property type="evidence" value="ECO:0007669"/>
    <property type="project" value="TreeGrafter"/>
</dbReference>
<dbReference type="GO" id="GO:0070180">
    <property type="term" value="F:large ribosomal subunit rRNA binding"/>
    <property type="evidence" value="ECO:0007669"/>
    <property type="project" value="UniProtKB-UniRule"/>
</dbReference>
<dbReference type="GO" id="GO:0003735">
    <property type="term" value="F:structural constituent of ribosome"/>
    <property type="evidence" value="ECO:0007669"/>
    <property type="project" value="InterPro"/>
</dbReference>
<dbReference type="GO" id="GO:0006412">
    <property type="term" value="P:translation"/>
    <property type="evidence" value="ECO:0007669"/>
    <property type="project" value="UniProtKB-UniRule"/>
</dbReference>
<dbReference type="CDD" id="cd00349">
    <property type="entry name" value="Ribosomal_L11"/>
    <property type="match status" value="1"/>
</dbReference>
<dbReference type="FunFam" id="1.10.10.250:FF:000006">
    <property type="entry name" value="50S ribosomal protein L11"/>
    <property type="match status" value="1"/>
</dbReference>
<dbReference type="FunFam" id="3.30.1550.10:FF:000007">
    <property type="entry name" value="50S ribosomal protein L11"/>
    <property type="match status" value="1"/>
</dbReference>
<dbReference type="Gene3D" id="1.10.10.250">
    <property type="entry name" value="Ribosomal protein L11, C-terminal domain"/>
    <property type="match status" value="1"/>
</dbReference>
<dbReference type="Gene3D" id="3.30.1550.10">
    <property type="entry name" value="Ribosomal protein L11/L12, N-terminal domain"/>
    <property type="match status" value="1"/>
</dbReference>
<dbReference type="HAMAP" id="MF_00736">
    <property type="entry name" value="Ribosomal_uL11"/>
    <property type="match status" value="1"/>
</dbReference>
<dbReference type="InterPro" id="IPR000911">
    <property type="entry name" value="Ribosomal_uL11"/>
</dbReference>
<dbReference type="InterPro" id="IPR020783">
    <property type="entry name" value="Ribosomal_uL11_C"/>
</dbReference>
<dbReference type="InterPro" id="IPR036769">
    <property type="entry name" value="Ribosomal_uL11_C_sf"/>
</dbReference>
<dbReference type="InterPro" id="IPR020785">
    <property type="entry name" value="Ribosomal_uL11_CS"/>
</dbReference>
<dbReference type="InterPro" id="IPR020784">
    <property type="entry name" value="Ribosomal_uL11_N"/>
</dbReference>
<dbReference type="InterPro" id="IPR036796">
    <property type="entry name" value="Ribosomal_uL11_N_sf"/>
</dbReference>
<dbReference type="NCBIfam" id="NF002232">
    <property type="entry name" value="PRK01143.1"/>
    <property type="match status" value="1"/>
</dbReference>
<dbReference type="PANTHER" id="PTHR11661">
    <property type="entry name" value="60S RIBOSOMAL PROTEIN L12"/>
    <property type="match status" value="1"/>
</dbReference>
<dbReference type="PANTHER" id="PTHR11661:SF1">
    <property type="entry name" value="LARGE RIBOSOMAL SUBUNIT PROTEIN UL11M"/>
    <property type="match status" value="1"/>
</dbReference>
<dbReference type="Pfam" id="PF00298">
    <property type="entry name" value="Ribosomal_L11"/>
    <property type="match status" value="1"/>
</dbReference>
<dbReference type="Pfam" id="PF03946">
    <property type="entry name" value="Ribosomal_L11_N"/>
    <property type="match status" value="1"/>
</dbReference>
<dbReference type="SMART" id="SM00649">
    <property type="entry name" value="RL11"/>
    <property type="match status" value="1"/>
</dbReference>
<dbReference type="SUPFAM" id="SSF54747">
    <property type="entry name" value="Ribosomal L11/L12e N-terminal domain"/>
    <property type="match status" value="1"/>
</dbReference>
<dbReference type="SUPFAM" id="SSF46906">
    <property type="entry name" value="Ribosomal protein L11, C-terminal domain"/>
    <property type="match status" value="1"/>
</dbReference>
<dbReference type="PROSITE" id="PS00359">
    <property type="entry name" value="RIBOSOMAL_L11"/>
    <property type="match status" value="1"/>
</dbReference>
<reference key="1">
    <citation type="journal article" date="2009" name="Proc. Natl. Acad. Sci. U.S.A.">
        <title>Biogeography of the Sulfolobus islandicus pan-genome.</title>
        <authorList>
            <person name="Reno M.L."/>
            <person name="Held N.L."/>
            <person name="Fields C.J."/>
            <person name="Burke P.V."/>
            <person name="Whitaker R.J."/>
        </authorList>
    </citation>
    <scope>NUCLEOTIDE SEQUENCE [LARGE SCALE GENOMIC DNA]</scope>
    <source>
        <strain>M.16.27</strain>
    </source>
</reference>
<organism>
    <name type="scientific">Saccharolobus islandicus (strain M.16.27)</name>
    <name type="common">Sulfolobus islandicus</name>
    <dbReference type="NCBI Taxonomy" id="427318"/>
    <lineage>
        <taxon>Archaea</taxon>
        <taxon>Thermoproteota</taxon>
        <taxon>Thermoprotei</taxon>
        <taxon>Sulfolobales</taxon>
        <taxon>Sulfolobaceae</taxon>
        <taxon>Saccharolobus</taxon>
    </lineage>
</organism>
<feature type="chain" id="PRO_1000212788" description="Large ribosomal subunit protein uL11">
    <location>
        <begin position="1"/>
        <end position="170"/>
    </location>
</feature>
<accession>C3MZB8</accession>
<protein>
    <recommendedName>
        <fullName evidence="1">Large ribosomal subunit protein uL11</fullName>
    </recommendedName>
    <alternativeName>
        <fullName evidence="2">50S ribosomal protein L11</fullName>
    </alternativeName>
</protein>
<comment type="function">
    <text evidence="1">Forms part of the ribosomal stalk which helps the ribosome interact with GTP-bound translation factors.</text>
</comment>
<comment type="subunit">
    <text evidence="1">Part of the ribosomal stalk of the 50S ribosomal subunit. Interacts with L10 and the large rRNA to form the base of the stalk. L10 forms an elongated spine to which L12 dimers bind in a sequential fashion forming a multimeric L10(L12)X complex.</text>
</comment>
<comment type="similarity">
    <text evidence="1">Belongs to the universal ribosomal protein uL11 family.</text>
</comment>
<sequence>MPTKSIKIMVEGGNVKPGPPLAPTLSQLGLNVGEVVKKLNEATSSFKGMSVPVTIEVDSNTKKYEIKVGIPTTTALLLKEAGASEPSGDPAHKKIGNLSLEQVIKIAIMKKPGLTTKSLKAAVKSMLGTAKSIGVTVENKDPKELVKEVEEGKYDDLLAKYENEWNEVKE</sequence>
<gene>
    <name evidence="1" type="primary">rpl11</name>
    <name type="ordered locus">M1627_1879</name>
</gene>